<accession>A1TTC4</accession>
<proteinExistence type="inferred from homology"/>
<feature type="chain" id="PRO_1000004851" description="Peptide chain release factor 1">
    <location>
        <begin position="1"/>
        <end position="360"/>
    </location>
</feature>
<feature type="modified residue" description="N5-methylglutamine" evidence="1">
    <location>
        <position position="235"/>
    </location>
</feature>
<evidence type="ECO:0000255" key="1">
    <source>
        <dbReference type="HAMAP-Rule" id="MF_00093"/>
    </source>
</evidence>
<name>RF1_PARC0</name>
<gene>
    <name evidence="1" type="primary">prfA</name>
    <name type="ordered locus">Aave_3664</name>
</gene>
<sequence>MKPFLRSQLERYAQRLEELDFLLSREDIMSDMAQYRTISREHAEVTQVAGRYTRYRQREADLAGAREMLDDPDMADMAREEIAAAEAELVQLEDELQRLLLPRDPDEARNAFLEIRAGTGGDESALFAGDLARMYTRYAATAGWKVEILSASDNEIGGYKEVVLRVEGDGVYGALRFESGGHRVQRVPATETQGRIHTSACTVAVMPEPDEQQAITLNPADLRIDTFRASGAGGQHINKTDSAVRVVHLPTGIVAECQDGRSQHSNKAKALQVLQARIQEKERSERAAKEAALRKGLVGSGDRSDRIRTYNFPQGRLTDHRINLTLYKLLAIMEGDLGEVLEALRHAREAELLAELESAA</sequence>
<protein>
    <recommendedName>
        <fullName evidence="1">Peptide chain release factor 1</fullName>
        <shortName evidence="1">RF-1</shortName>
    </recommendedName>
</protein>
<organism>
    <name type="scientific">Paracidovorax citrulli (strain AAC00-1)</name>
    <name type="common">Acidovorax citrulli</name>
    <dbReference type="NCBI Taxonomy" id="397945"/>
    <lineage>
        <taxon>Bacteria</taxon>
        <taxon>Pseudomonadati</taxon>
        <taxon>Pseudomonadota</taxon>
        <taxon>Betaproteobacteria</taxon>
        <taxon>Burkholderiales</taxon>
        <taxon>Comamonadaceae</taxon>
        <taxon>Paracidovorax</taxon>
    </lineage>
</organism>
<comment type="function">
    <text evidence="1">Peptide chain release factor 1 directs the termination of translation in response to the peptide chain termination codons UAG and UAA.</text>
</comment>
<comment type="subcellular location">
    <subcellularLocation>
        <location evidence="1">Cytoplasm</location>
    </subcellularLocation>
</comment>
<comment type="PTM">
    <text evidence="1">Methylated by PrmC. Methylation increases the termination efficiency of RF1.</text>
</comment>
<comment type="similarity">
    <text evidence="1">Belongs to the prokaryotic/mitochondrial release factor family.</text>
</comment>
<reference key="1">
    <citation type="submission" date="2006-12" db="EMBL/GenBank/DDBJ databases">
        <title>Complete sequence of Acidovorax avenae subsp. citrulli AAC00-1.</title>
        <authorList>
            <person name="Copeland A."/>
            <person name="Lucas S."/>
            <person name="Lapidus A."/>
            <person name="Barry K."/>
            <person name="Detter J.C."/>
            <person name="Glavina del Rio T."/>
            <person name="Dalin E."/>
            <person name="Tice H."/>
            <person name="Pitluck S."/>
            <person name="Kiss H."/>
            <person name="Brettin T."/>
            <person name="Bruce D."/>
            <person name="Han C."/>
            <person name="Tapia R."/>
            <person name="Gilna P."/>
            <person name="Schmutz J."/>
            <person name="Larimer F."/>
            <person name="Land M."/>
            <person name="Hauser L."/>
            <person name="Kyrpides N."/>
            <person name="Kim E."/>
            <person name="Stahl D."/>
            <person name="Richardson P."/>
        </authorList>
    </citation>
    <scope>NUCLEOTIDE SEQUENCE [LARGE SCALE GENOMIC DNA]</scope>
    <source>
        <strain>AAC00-1</strain>
    </source>
</reference>
<dbReference type="EMBL" id="CP000512">
    <property type="protein sequence ID" value="ABM34212.1"/>
    <property type="molecule type" value="Genomic_DNA"/>
</dbReference>
<dbReference type="RefSeq" id="WP_011796706.1">
    <property type="nucleotide sequence ID" value="NC_008752.1"/>
</dbReference>
<dbReference type="SMR" id="A1TTC4"/>
<dbReference type="STRING" id="397945.Aave_3664"/>
<dbReference type="GeneID" id="79791446"/>
<dbReference type="KEGG" id="aav:Aave_3664"/>
<dbReference type="eggNOG" id="COG0216">
    <property type="taxonomic scope" value="Bacteria"/>
</dbReference>
<dbReference type="HOGENOM" id="CLU_036856_0_1_4"/>
<dbReference type="OrthoDB" id="9806673at2"/>
<dbReference type="Proteomes" id="UP000002596">
    <property type="component" value="Chromosome"/>
</dbReference>
<dbReference type="GO" id="GO:0005737">
    <property type="term" value="C:cytoplasm"/>
    <property type="evidence" value="ECO:0007669"/>
    <property type="project" value="UniProtKB-SubCell"/>
</dbReference>
<dbReference type="GO" id="GO:0016149">
    <property type="term" value="F:translation release factor activity, codon specific"/>
    <property type="evidence" value="ECO:0007669"/>
    <property type="project" value="UniProtKB-UniRule"/>
</dbReference>
<dbReference type="FunFam" id="3.30.160.20:FF:000004">
    <property type="entry name" value="Peptide chain release factor 1"/>
    <property type="match status" value="1"/>
</dbReference>
<dbReference type="FunFam" id="3.30.70.1660:FF:000002">
    <property type="entry name" value="Peptide chain release factor 1"/>
    <property type="match status" value="1"/>
</dbReference>
<dbReference type="FunFam" id="3.30.70.1660:FF:000004">
    <property type="entry name" value="Peptide chain release factor 1"/>
    <property type="match status" value="1"/>
</dbReference>
<dbReference type="Gene3D" id="3.30.160.20">
    <property type="match status" value="1"/>
</dbReference>
<dbReference type="Gene3D" id="3.30.70.1660">
    <property type="match status" value="1"/>
</dbReference>
<dbReference type="Gene3D" id="6.10.140.1950">
    <property type="match status" value="1"/>
</dbReference>
<dbReference type="HAMAP" id="MF_00093">
    <property type="entry name" value="Rel_fac_1"/>
    <property type="match status" value="1"/>
</dbReference>
<dbReference type="InterPro" id="IPR005139">
    <property type="entry name" value="PCRF"/>
</dbReference>
<dbReference type="InterPro" id="IPR000352">
    <property type="entry name" value="Pep_chain_release_fac_I"/>
</dbReference>
<dbReference type="InterPro" id="IPR045853">
    <property type="entry name" value="Pep_chain_release_fac_I_sf"/>
</dbReference>
<dbReference type="InterPro" id="IPR050057">
    <property type="entry name" value="Prokaryotic/Mito_RF"/>
</dbReference>
<dbReference type="InterPro" id="IPR004373">
    <property type="entry name" value="RF-1"/>
</dbReference>
<dbReference type="NCBIfam" id="TIGR00019">
    <property type="entry name" value="prfA"/>
    <property type="match status" value="1"/>
</dbReference>
<dbReference type="NCBIfam" id="NF001859">
    <property type="entry name" value="PRK00591.1"/>
    <property type="match status" value="1"/>
</dbReference>
<dbReference type="PANTHER" id="PTHR43804">
    <property type="entry name" value="LD18447P"/>
    <property type="match status" value="1"/>
</dbReference>
<dbReference type="PANTHER" id="PTHR43804:SF7">
    <property type="entry name" value="LD18447P"/>
    <property type="match status" value="1"/>
</dbReference>
<dbReference type="Pfam" id="PF03462">
    <property type="entry name" value="PCRF"/>
    <property type="match status" value="1"/>
</dbReference>
<dbReference type="Pfam" id="PF00472">
    <property type="entry name" value="RF-1"/>
    <property type="match status" value="1"/>
</dbReference>
<dbReference type="SMART" id="SM00937">
    <property type="entry name" value="PCRF"/>
    <property type="match status" value="1"/>
</dbReference>
<dbReference type="SUPFAM" id="SSF75620">
    <property type="entry name" value="Release factor"/>
    <property type="match status" value="1"/>
</dbReference>
<dbReference type="PROSITE" id="PS00745">
    <property type="entry name" value="RF_PROK_I"/>
    <property type="match status" value="1"/>
</dbReference>
<keyword id="KW-0963">Cytoplasm</keyword>
<keyword id="KW-0488">Methylation</keyword>
<keyword id="KW-0648">Protein biosynthesis</keyword>